<protein>
    <recommendedName>
        <fullName evidence="1">Chromosomal replication initiator protein DnaA</fullName>
    </recommendedName>
</protein>
<comment type="function">
    <text evidence="1">Plays an essential role in the initiation and regulation of chromosomal replication. ATP-DnaA binds to the origin of replication (oriC) to initiate formation of the DNA replication initiation complex once per cell cycle. Binds the DnaA box (a 9 base pair repeat at the origin) and separates the double-stranded (ds)DNA. Forms a right-handed helical filament on oriC DNA; dsDNA binds to the exterior of the filament while single-stranded (ss)DNA is stabiized in the filament's interior. The ATP-DnaA-oriC complex binds and stabilizes one strand of the AT-rich DNA unwinding element (DUE), permitting loading of DNA polymerase. After initiation quickly degrades to an ADP-DnaA complex that is not apt for DNA replication. Binds acidic phospholipids.</text>
</comment>
<comment type="subunit">
    <text evidence="1">Oligomerizes as a right-handed, spiral filament on DNA at oriC.</text>
</comment>
<comment type="subcellular location">
    <subcellularLocation>
        <location evidence="1">Cytoplasm</location>
    </subcellularLocation>
</comment>
<comment type="domain">
    <text evidence="1">Domain I is involved in oligomerization and binding regulators, domain II is flexibile and of varying length in different bacteria, domain III forms the AAA+ region, while domain IV binds dsDNA.</text>
</comment>
<comment type="similarity">
    <text evidence="1">Belongs to the DnaA family.</text>
</comment>
<reference key="1">
    <citation type="journal article" date="2012" name="BMC Genomics">
        <title>Comparative genomics and transcriptomics of lineages I, II, and III strains of Listeria monocytogenes.</title>
        <authorList>
            <person name="Hain T."/>
            <person name="Ghai R."/>
            <person name="Billion A."/>
            <person name="Kuenne C.T."/>
            <person name="Steinweg C."/>
            <person name="Izar B."/>
            <person name="Mohamed W."/>
            <person name="Mraheil M."/>
            <person name="Domann E."/>
            <person name="Schaffrath S."/>
            <person name="Karst U."/>
            <person name="Goesmann A."/>
            <person name="Oehm S."/>
            <person name="Puhler A."/>
            <person name="Merkl R."/>
            <person name="Vorwerk S."/>
            <person name="Glaser P."/>
            <person name="Garrido P."/>
            <person name="Rusniok C."/>
            <person name="Buchrieser C."/>
            <person name="Goebel W."/>
            <person name="Chakraborty T."/>
        </authorList>
    </citation>
    <scope>NUCLEOTIDE SEQUENCE [LARGE SCALE GENOMIC DNA]</scope>
    <source>
        <strain>CLIP80459</strain>
    </source>
</reference>
<keyword id="KW-0067">ATP-binding</keyword>
<keyword id="KW-0963">Cytoplasm</keyword>
<keyword id="KW-0235">DNA replication</keyword>
<keyword id="KW-0238">DNA-binding</keyword>
<keyword id="KW-0446">Lipid-binding</keyword>
<keyword id="KW-0547">Nucleotide-binding</keyword>
<proteinExistence type="inferred from homology"/>
<name>DNAA_LISMC</name>
<accession>C1L2Z8</accession>
<gene>
    <name evidence="1" type="primary">dnaA</name>
    <name type="ordered locus">Lm4b_00001</name>
</gene>
<evidence type="ECO:0000255" key="1">
    <source>
        <dbReference type="HAMAP-Rule" id="MF_00377"/>
    </source>
</evidence>
<dbReference type="EMBL" id="FM242711">
    <property type="protein sequence ID" value="CAS03790.1"/>
    <property type="molecule type" value="Genomic_DNA"/>
</dbReference>
<dbReference type="RefSeq" id="WP_012680999.1">
    <property type="nucleotide sequence ID" value="NC_012488.1"/>
</dbReference>
<dbReference type="SMR" id="C1L2Z8"/>
<dbReference type="KEGG" id="lmc:Lm4b_00001"/>
<dbReference type="HOGENOM" id="CLU_026910_3_1_9"/>
<dbReference type="GO" id="GO:0005737">
    <property type="term" value="C:cytoplasm"/>
    <property type="evidence" value="ECO:0007669"/>
    <property type="project" value="UniProtKB-SubCell"/>
</dbReference>
<dbReference type="GO" id="GO:0005886">
    <property type="term" value="C:plasma membrane"/>
    <property type="evidence" value="ECO:0007669"/>
    <property type="project" value="TreeGrafter"/>
</dbReference>
<dbReference type="GO" id="GO:0005524">
    <property type="term" value="F:ATP binding"/>
    <property type="evidence" value="ECO:0007669"/>
    <property type="project" value="UniProtKB-UniRule"/>
</dbReference>
<dbReference type="GO" id="GO:0016887">
    <property type="term" value="F:ATP hydrolysis activity"/>
    <property type="evidence" value="ECO:0007669"/>
    <property type="project" value="InterPro"/>
</dbReference>
<dbReference type="GO" id="GO:0003688">
    <property type="term" value="F:DNA replication origin binding"/>
    <property type="evidence" value="ECO:0007669"/>
    <property type="project" value="UniProtKB-UniRule"/>
</dbReference>
<dbReference type="GO" id="GO:0008289">
    <property type="term" value="F:lipid binding"/>
    <property type="evidence" value="ECO:0007669"/>
    <property type="project" value="UniProtKB-KW"/>
</dbReference>
<dbReference type="GO" id="GO:0006270">
    <property type="term" value="P:DNA replication initiation"/>
    <property type="evidence" value="ECO:0007669"/>
    <property type="project" value="UniProtKB-UniRule"/>
</dbReference>
<dbReference type="GO" id="GO:0006275">
    <property type="term" value="P:regulation of DNA replication"/>
    <property type="evidence" value="ECO:0007669"/>
    <property type="project" value="UniProtKB-UniRule"/>
</dbReference>
<dbReference type="CDD" id="cd00009">
    <property type="entry name" value="AAA"/>
    <property type="match status" value="1"/>
</dbReference>
<dbReference type="CDD" id="cd06571">
    <property type="entry name" value="Bac_DnaA_C"/>
    <property type="match status" value="1"/>
</dbReference>
<dbReference type="FunFam" id="1.10.1750.10:FF:000003">
    <property type="entry name" value="Chromosomal replication initiator protein DnaA"/>
    <property type="match status" value="1"/>
</dbReference>
<dbReference type="FunFam" id="1.10.8.60:FF:000003">
    <property type="entry name" value="Chromosomal replication initiator protein DnaA"/>
    <property type="match status" value="1"/>
</dbReference>
<dbReference type="FunFam" id="3.40.50.300:FF:000150">
    <property type="entry name" value="Chromosomal replication initiator protein DnaA"/>
    <property type="match status" value="1"/>
</dbReference>
<dbReference type="Gene3D" id="1.10.1750.10">
    <property type="match status" value="1"/>
</dbReference>
<dbReference type="Gene3D" id="1.10.8.60">
    <property type="match status" value="1"/>
</dbReference>
<dbReference type="Gene3D" id="3.30.300.180">
    <property type="match status" value="1"/>
</dbReference>
<dbReference type="Gene3D" id="3.40.50.300">
    <property type="entry name" value="P-loop containing nucleotide triphosphate hydrolases"/>
    <property type="match status" value="1"/>
</dbReference>
<dbReference type="HAMAP" id="MF_00377">
    <property type="entry name" value="DnaA_bact"/>
    <property type="match status" value="1"/>
</dbReference>
<dbReference type="InterPro" id="IPR003593">
    <property type="entry name" value="AAA+_ATPase"/>
</dbReference>
<dbReference type="InterPro" id="IPR001957">
    <property type="entry name" value="Chromosome_initiator_DnaA"/>
</dbReference>
<dbReference type="InterPro" id="IPR020591">
    <property type="entry name" value="Chromosome_initiator_DnaA-like"/>
</dbReference>
<dbReference type="InterPro" id="IPR018312">
    <property type="entry name" value="Chromosome_initiator_DnaA_CS"/>
</dbReference>
<dbReference type="InterPro" id="IPR013159">
    <property type="entry name" value="DnaA_C"/>
</dbReference>
<dbReference type="InterPro" id="IPR013317">
    <property type="entry name" value="DnaA_dom"/>
</dbReference>
<dbReference type="InterPro" id="IPR024633">
    <property type="entry name" value="DnaA_N_dom"/>
</dbReference>
<dbReference type="InterPro" id="IPR038454">
    <property type="entry name" value="DnaA_N_sf"/>
</dbReference>
<dbReference type="InterPro" id="IPR027417">
    <property type="entry name" value="P-loop_NTPase"/>
</dbReference>
<dbReference type="InterPro" id="IPR010921">
    <property type="entry name" value="Trp_repressor/repl_initiator"/>
</dbReference>
<dbReference type="NCBIfam" id="TIGR00362">
    <property type="entry name" value="DnaA"/>
    <property type="match status" value="1"/>
</dbReference>
<dbReference type="NCBIfam" id="NF010686">
    <property type="entry name" value="PRK14086.1"/>
    <property type="match status" value="1"/>
</dbReference>
<dbReference type="PANTHER" id="PTHR30050">
    <property type="entry name" value="CHROMOSOMAL REPLICATION INITIATOR PROTEIN DNAA"/>
    <property type="match status" value="1"/>
</dbReference>
<dbReference type="PANTHER" id="PTHR30050:SF2">
    <property type="entry name" value="CHROMOSOMAL REPLICATION INITIATOR PROTEIN DNAA"/>
    <property type="match status" value="1"/>
</dbReference>
<dbReference type="Pfam" id="PF00308">
    <property type="entry name" value="Bac_DnaA"/>
    <property type="match status" value="1"/>
</dbReference>
<dbReference type="Pfam" id="PF08299">
    <property type="entry name" value="Bac_DnaA_C"/>
    <property type="match status" value="1"/>
</dbReference>
<dbReference type="Pfam" id="PF11638">
    <property type="entry name" value="DnaA_N"/>
    <property type="match status" value="1"/>
</dbReference>
<dbReference type="PRINTS" id="PR00051">
    <property type="entry name" value="DNAA"/>
</dbReference>
<dbReference type="SMART" id="SM00382">
    <property type="entry name" value="AAA"/>
    <property type="match status" value="1"/>
</dbReference>
<dbReference type="SMART" id="SM00760">
    <property type="entry name" value="Bac_DnaA_C"/>
    <property type="match status" value="1"/>
</dbReference>
<dbReference type="SUPFAM" id="SSF52540">
    <property type="entry name" value="P-loop containing nucleoside triphosphate hydrolases"/>
    <property type="match status" value="1"/>
</dbReference>
<dbReference type="SUPFAM" id="SSF48295">
    <property type="entry name" value="TrpR-like"/>
    <property type="match status" value="1"/>
</dbReference>
<dbReference type="PROSITE" id="PS01008">
    <property type="entry name" value="DNAA"/>
    <property type="match status" value="1"/>
</dbReference>
<sequence length="451" mass="51367">MQSIEDIWQETLQIVKKNMSKPSYDTWMKSTTAHSLEGNTFIISAPNNFVRDWLEKSYTQFIANILQEITGRLFDVRFIDGEQEENFEYTVIKPNPALDEDGVEIGKHMLNPRYVFDTFVIGSGNRFAHAASLAVAEAPAKAYNPLFIYGGVGLGKTHLMHAVGHYVQQHKDNAKVMYLSSEKFTNEFISSIRDNKTEEFRTKYRNVDVLLIDDIQFLAGKEGTQEEFFHTFNTLYDEQKQIIISSDRPPKEIPTLEDRLRSRFEWGLITDITPPDLETRIAILRKKAKADGLDIPNEVMLYIANQIDSNIRELEGALIRVVAYSSLVNKDITAGLAAEALKDIIPSSKSQVITISGIQEAVGEYFHVRLEDFKAKKRTKSIAFPRQIAMYLSRELTDASLPKIGDEFGGRDHTTVIHAHEKISQLLKTDQVLKNDLAEIEKNLRKAQNMF</sequence>
<feature type="chain" id="PRO_1000205656" description="Chromosomal replication initiator protein DnaA">
    <location>
        <begin position="1"/>
        <end position="451"/>
    </location>
</feature>
<feature type="region of interest" description="Domain I, interacts with DnaA modulators" evidence="1">
    <location>
        <begin position="1"/>
        <end position="72"/>
    </location>
</feature>
<feature type="region of interest" description="Domain II" evidence="1">
    <location>
        <begin position="72"/>
        <end position="108"/>
    </location>
</feature>
<feature type="region of interest" description="Domain III, AAA+ region" evidence="1">
    <location>
        <begin position="109"/>
        <end position="325"/>
    </location>
</feature>
<feature type="region of interest" description="Domain IV, binds dsDNA" evidence="1">
    <location>
        <begin position="326"/>
        <end position="451"/>
    </location>
</feature>
<feature type="binding site" evidence="1">
    <location>
        <position position="153"/>
    </location>
    <ligand>
        <name>ATP</name>
        <dbReference type="ChEBI" id="CHEBI:30616"/>
    </ligand>
</feature>
<feature type="binding site" evidence="1">
    <location>
        <position position="155"/>
    </location>
    <ligand>
        <name>ATP</name>
        <dbReference type="ChEBI" id="CHEBI:30616"/>
    </ligand>
</feature>
<feature type="binding site" evidence="1">
    <location>
        <position position="156"/>
    </location>
    <ligand>
        <name>ATP</name>
        <dbReference type="ChEBI" id="CHEBI:30616"/>
    </ligand>
</feature>
<feature type="binding site" evidence="1">
    <location>
        <position position="157"/>
    </location>
    <ligand>
        <name>ATP</name>
        <dbReference type="ChEBI" id="CHEBI:30616"/>
    </ligand>
</feature>
<organism>
    <name type="scientific">Listeria monocytogenes serotype 4b (strain CLIP80459)</name>
    <dbReference type="NCBI Taxonomy" id="568819"/>
    <lineage>
        <taxon>Bacteria</taxon>
        <taxon>Bacillati</taxon>
        <taxon>Bacillota</taxon>
        <taxon>Bacilli</taxon>
        <taxon>Bacillales</taxon>
        <taxon>Listeriaceae</taxon>
        <taxon>Listeria</taxon>
    </lineage>
</organism>